<protein>
    <recommendedName>
        <fullName>RH-like protein IA</fullName>
    </recommendedName>
    <alternativeName>
        <fullName>Rhesus-like protein IA</fullName>
    </alternativeName>
</protein>
<evidence type="ECO:0000255" key="1"/>
<evidence type="ECO:0000305" key="2"/>
<dbReference type="EMBL" id="L37049">
    <property type="protein sequence ID" value="AAA65623.1"/>
    <property type="molecule type" value="mRNA"/>
</dbReference>
<dbReference type="PIR" id="I37004">
    <property type="entry name" value="I37004"/>
</dbReference>
<dbReference type="SMR" id="Q28813"/>
<dbReference type="FunCoup" id="Q28813">
    <property type="interactions" value="18"/>
</dbReference>
<dbReference type="PaxDb" id="9598-ENSPTRP00000043112"/>
<dbReference type="eggNOG" id="KOG3796">
    <property type="taxonomic scope" value="Eukaryota"/>
</dbReference>
<dbReference type="InParanoid" id="Q28813"/>
<dbReference type="Proteomes" id="UP000002277">
    <property type="component" value="Unplaced"/>
</dbReference>
<dbReference type="GO" id="GO:0005886">
    <property type="term" value="C:plasma membrane"/>
    <property type="evidence" value="ECO:0000318"/>
    <property type="project" value="GO_Central"/>
</dbReference>
<dbReference type="GO" id="GO:0008519">
    <property type="term" value="F:ammonium channel activity"/>
    <property type="evidence" value="ECO:0000318"/>
    <property type="project" value="GO_Central"/>
</dbReference>
<dbReference type="GO" id="GO:0097272">
    <property type="term" value="P:ammonium homeostasis"/>
    <property type="evidence" value="ECO:0000318"/>
    <property type="project" value="GO_Central"/>
</dbReference>
<dbReference type="GO" id="GO:0072488">
    <property type="term" value="P:ammonium transmembrane transport"/>
    <property type="evidence" value="ECO:0000318"/>
    <property type="project" value="GO_Central"/>
</dbReference>
<dbReference type="FunFam" id="1.10.3430.10:FF:000009">
    <property type="entry name" value="Blood group Rh(D) polypeptide"/>
    <property type="match status" value="1"/>
</dbReference>
<dbReference type="Gene3D" id="1.10.3430.10">
    <property type="entry name" value="Ammonium transporter AmtB like domains"/>
    <property type="match status" value="1"/>
</dbReference>
<dbReference type="InterPro" id="IPR029020">
    <property type="entry name" value="Ammonium/urea_transptr"/>
</dbReference>
<dbReference type="InterPro" id="IPR024041">
    <property type="entry name" value="NH4_transpt_AmtB-like_dom"/>
</dbReference>
<dbReference type="InterPro" id="IPR002229">
    <property type="entry name" value="RhesusRHD"/>
</dbReference>
<dbReference type="PANTHER" id="PTHR11730">
    <property type="entry name" value="AMMONIUM TRANSPORTER"/>
    <property type="match status" value="1"/>
</dbReference>
<dbReference type="PANTHER" id="PTHR11730:SF43">
    <property type="entry name" value="BLOOD GROUP RH(CE) POLYPEPTIDE-RELATED"/>
    <property type="match status" value="1"/>
</dbReference>
<dbReference type="Pfam" id="PF00909">
    <property type="entry name" value="Ammonium_transp"/>
    <property type="match status" value="1"/>
</dbReference>
<dbReference type="PRINTS" id="PR00342">
    <property type="entry name" value="RHESUSRHD"/>
</dbReference>
<dbReference type="SUPFAM" id="SSF111352">
    <property type="entry name" value="Ammonium transporter"/>
    <property type="match status" value="1"/>
</dbReference>
<comment type="function">
    <text>May be part of an oligomeric complex which is likely to have a transport or channel function in the erythrocyte membrane.</text>
</comment>
<comment type="subcellular location">
    <subcellularLocation>
        <location>Membrane</location>
        <topology>Multi-pass membrane protein</topology>
    </subcellularLocation>
</comment>
<comment type="similarity">
    <text evidence="2">Belongs to the ammonium transporter (TC 2.A.49) family. Rh subfamily.</text>
</comment>
<sequence>MSSKYPRSVRRCLPLCALTLEAALILLFYFFTQYDASLEDQKGLVASYQVGQDLTVMAAIGFGFLTSSFRRHSWSSVAFSLFMLALGVQWAILLDGFLSQFPPGKVVITLFSIRLATTSALSVLISVDAVLGKVNLVQLVVMVLVEVTALGTVRMVISNIFNTDYHMNLMHIYVFAAYFGLSVAWCLPKPLPKGTEDKDQIATIPSLSAMLGALFLWMFWPSFNSALLRSPIERKNAVFNTYYAVAVSVVTAISGSSLAHPQGKISMSYMHNAVLAGGVAVGTSCHLITSPWLAMVLGLVAGLISIGGAKYLPGCCNRVLGIYHSSVMHYNFSLLGLLGEIIYIVLLVHHTVWNGNGMIGFQVLLRIGEFSLATTIALTSGLLTGLLLNLKIWKAPHAAKYFDDQVFWKFPHLAVEF</sequence>
<name>RHLA_PANTR</name>
<keyword id="KW-0472">Membrane</keyword>
<keyword id="KW-1185">Reference proteome</keyword>
<keyword id="KW-0812">Transmembrane</keyword>
<keyword id="KW-1133">Transmembrane helix</keyword>
<feature type="chain" id="PRO_0000168196" description="RH-like protein IA">
    <location>
        <begin position="1"/>
        <end position="417"/>
    </location>
</feature>
<feature type="transmembrane region" description="Helical" evidence="1">
    <location>
        <begin position="12"/>
        <end position="32"/>
    </location>
</feature>
<feature type="transmembrane region" description="Helical" evidence="1">
    <location>
        <begin position="44"/>
        <end position="64"/>
    </location>
</feature>
<feature type="transmembrane region" description="Helical" evidence="1">
    <location>
        <begin position="77"/>
        <end position="97"/>
    </location>
</feature>
<feature type="transmembrane region" description="Helical" evidence="1">
    <location>
        <begin position="125"/>
        <end position="145"/>
    </location>
</feature>
<feature type="transmembrane region" description="Helical" evidence="1">
    <location>
        <begin position="172"/>
        <end position="192"/>
    </location>
</feature>
<feature type="transmembrane region" description="Helical" evidence="1">
    <location>
        <begin position="203"/>
        <end position="223"/>
    </location>
</feature>
<feature type="transmembrane region" description="Helical" evidence="1">
    <location>
        <begin position="238"/>
        <end position="258"/>
    </location>
</feature>
<feature type="transmembrane region" description="Helical" evidence="1">
    <location>
        <begin position="265"/>
        <end position="285"/>
    </location>
</feature>
<feature type="transmembrane region" description="Helical" evidence="1">
    <location>
        <begin position="287"/>
        <end position="307"/>
    </location>
</feature>
<feature type="transmembrane region" description="Helical" evidence="1">
    <location>
        <begin position="331"/>
        <end position="351"/>
    </location>
</feature>
<feature type="transmembrane region" description="Helical" evidence="1">
    <location>
        <begin position="358"/>
        <end position="378"/>
    </location>
</feature>
<proteinExistence type="evidence at transcript level"/>
<organism>
    <name type="scientific">Pan troglodytes</name>
    <name type="common">Chimpanzee</name>
    <dbReference type="NCBI Taxonomy" id="9598"/>
    <lineage>
        <taxon>Eukaryota</taxon>
        <taxon>Metazoa</taxon>
        <taxon>Chordata</taxon>
        <taxon>Craniata</taxon>
        <taxon>Vertebrata</taxon>
        <taxon>Euteleostomi</taxon>
        <taxon>Mammalia</taxon>
        <taxon>Eutheria</taxon>
        <taxon>Euarchontoglires</taxon>
        <taxon>Primates</taxon>
        <taxon>Haplorrhini</taxon>
        <taxon>Catarrhini</taxon>
        <taxon>Hominidae</taxon>
        <taxon>Pan</taxon>
    </lineage>
</organism>
<accession>Q28813</accession>
<reference key="1">
    <citation type="journal article" date="1994" name="Biochem. Genet.">
        <title>Molecular genetics of chimpanzee Rh-related genes: their relationship with the R-C-E-F blood group system, the chimpanzee counterpart of the human rhesus system.</title>
        <authorList>
            <person name="Salvignol I."/>
            <person name="Blancher A."/>
            <person name="Calvas P."/>
            <person name="Clayton J."/>
            <person name="Socha W.W."/>
            <person name="Colin Y."/>
            <person name="Ruffie J."/>
        </authorList>
    </citation>
    <scope>NUCLEOTIDE SEQUENCE [MRNA]</scope>
    <source>
        <tissue>Bone marrow</tissue>
    </source>
</reference>